<name>SPRY7_RAT</name>
<evidence type="ECO:0000250" key="1">
    <source>
        <dbReference type="UniProtKB" id="Q5W111"/>
    </source>
</evidence>
<evidence type="ECO:0000255" key="2">
    <source>
        <dbReference type="PROSITE-ProRule" id="PRU00548"/>
    </source>
</evidence>
<reference key="1">
    <citation type="journal article" date="2004" name="Genome Res.">
        <title>The status, quality, and expansion of the NIH full-length cDNA project: the Mammalian Gene Collection (MGC).</title>
        <authorList>
            <consortium name="The MGC Project Team"/>
        </authorList>
    </citation>
    <scope>NUCLEOTIDE SEQUENCE [LARGE SCALE MRNA]</scope>
    <source>
        <tissue>Kidney</tissue>
    </source>
</reference>
<protein>
    <recommendedName>
        <fullName>SPRY domain-containing protein 7</fullName>
    </recommendedName>
    <alternativeName>
        <fullName>Chronic lymphocytic leukemia deletion region gene 6 protein homolog</fullName>
        <shortName>CLL deletion region gene 6 protein homolog</shortName>
    </alternativeName>
</protein>
<sequence length="196" mass="21681">MAASAWCCLRCCRDGGTGHIPLKEMPAVQLDTQHMGTDVVIVKNGRRICGTGGCLASAPLHQNKSYFEFKIQSTGIWGIGVATQKVNLNQIPLGRDMHSLVMRNDGALYHNNEEKNRLPANSLPQEGDVVGITYDHVELNVYLNGKNMHCPASGIRGTVYPVVYVDDSAILDCQFSEFYHTPPPGFEKILFEQQIF</sequence>
<accession>Q5M7T2</accession>
<dbReference type="EMBL" id="BC088471">
    <property type="protein sequence ID" value="AAH88471.1"/>
    <property type="molecule type" value="mRNA"/>
</dbReference>
<dbReference type="RefSeq" id="NP_001009635.1">
    <property type="nucleotide sequence ID" value="NM_001009635.1"/>
</dbReference>
<dbReference type="SMR" id="Q5M7T2"/>
<dbReference type="FunCoup" id="Q5M7T2">
    <property type="interactions" value="1706"/>
</dbReference>
<dbReference type="IntAct" id="Q5M7T2">
    <property type="interactions" value="1"/>
</dbReference>
<dbReference type="STRING" id="10116.ENSRNOP00000020419"/>
<dbReference type="PhosphoSitePlus" id="Q5M7T2"/>
<dbReference type="SwissPalm" id="Q5M7T2"/>
<dbReference type="PaxDb" id="10116-ENSRNOP00000020419"/>
<dbReference type="Ensembl" id="ENSRNOT00000020419.6">
    <property type="protein sequence ID" value="ENSRNOP00000020419.3"/>
    <property type="gene ID" value="ENSRNOG00000015095.8"/>
</dbReference>
<dbReference type="GeneID" id="290303"/>
<dbReference type="KEGG" id="rno:290303"/>
<dbReference type="UCSC" id="RGD:1306437">
    <property type="organism name" value="rat"/>
</dbReference>
<dbReference type="AGR" id="RGD:1306437"/>
<dbReference type="CTD" id="57213"/>
<dbReference type="RGD" id="1306437">
    <property type="gene designation" value="Spryd7"/>
</dbReference>
<dbReference type="eggNOG" id="KOG4030">
    <property type="taxonomic scope" value="Eukaryota"/>
</dbReference>
<dbReference type="GeneTree" id="ENSGT00390000011048"/>
<dbReference type="HOGENOM" id="CLU_085855_0_0_1"/>
<dbReference type="InParanoid" id="Q5M7T2"/>
<dbReference type="OMA" id="HMGNEVV"/>
<dbReference type="OrthoDB" id="40953at2759"/>
<dbReference type="PhylomeDB" id="Q5M7T2"/>
<dbReference type="TreeFam" id="TF314996"/>
<dbReference type="PRO" id="PR:Q5M7T2"/>
<dbReference type="Proteomes" id="UP000002494">
    <property type="component" value="Chromosome 15"/>
</dbReference>
<dbReference type="Bgee" id="ENSRNOG00000015095">
    <property type="expression patterns" value="Expressed in heart and 20 other cell types or tissues"/>
</dbReference>
<dbReference type="CDD" id="cd12880">
    <property type="entry name" value="SPRYD7"/>
    <property type="match status" value="1"/>
</dbReference>
<dbReference type="Gene3D" id="2.60.120.920">
    <property type="match status" value="1"/>
</dbReference>
<dbReference type="InterPro" id="IPR001870">
    <property type="entry name" value="B30.2/SPRY"/>
</dbReference>
<dbReference type="InterPro" id="IPR043136">
    <property type="entry name" value="B30.2/SPRY_sf"/>
</dbReference>
<dbReference type="InterPro" id="IPR013320">
    <property type="entry name" value="ConA-like_dom_sf"/>
</dbReference>
<dbReference type="InterPro" id="IPR003877">
    <property type="entry name" value="SPRY_dom"/>
</dbReference>
<dbReference type="InterPro" id="IPR035766">
    <property type="entry name" value="SPRYD7"/>
</dbReference>
<dbReference type="PANTHER" id="PTHR20951">
    <property type="entry name" value="C13ORF1 PROTEIN-RELATED"/>
    <property type="match status" value="1"/>
</dbReference>
<dbReference type="PANTHER" id="PTHR20951:SF2">
    <property type="entry name" value="SPRY DOMAIN-CONTAINING PROTEIN 7"/>
    <property type="match status" value="1"/>
</dbReference>
<dbReference type="Pfam" id="PF00622">
    <property type="entry name" value="SPRY"/>
    <property type="match status" value="1"/>
</dbReference>
<dbReference type="SMART" id="SM00449">
    <property type="entry name" value="SPRY"/>
    <property type="match status" value="1"/>
</dbReference>
<dbReference type="SUPFAM" id="SSF49899">
    <property type="entry name" value="Concanavalin A-like lectins/glucanases"/>
    <property type="match status" value="1"/>
</dbReference>
<dbReference type="PROSITE" id="PS50188">
    <property type="entry name" value="B302_SPRY"/>
    <property type="match status" value="1"/>
</dbReference>
<gene>
    <name type="primary">Spryd7</name>
    <name type="synonym">Clld6</name>
</gene>
<feature type="initiator methionine" description="Removed" evidence="1">
    <location>
        <position position="1"/>
    </location>
</feature>
<feature type="chain" id="PRO_0000243927" description="SPRY domain-containing protein 7">
    <location>
        <begin position="2"/>
        <end position="196"/>
    </location>
</feature>
<feature type="domain" description="B30.2/SPRY" evidence="2">
    <location>
        <begin position="2"/>
        <end position="184"/>
    </location>
</feature>
<feature type="modified residue" description="N-acetylalanine" evidence="1">
    <location>
        <position position="2"/>
    </location>
</feature>
<organism>
    <name type="scientific">Rattus norvegicus</name>
    <name type="common">Rat</name>
    <dbReference type="NCBI Taxonomy" id="10116"/>
    <lineage>
        <taxon>Eukaryota</taxon>
        <taxon>Metazoa</taxon>
        <taxon>Chordata</taxon>
        <taxon>Craniata</taxon>
        <taxon>Vertebrata</taxon>
        <taxon>Euteleostomi</taxon>
        <taxon>Mammalia</taxon>
        <taxon>Eutheria</taxon>
        <taxon>Euarchontoglires</taxon>
        <taxon>Glires</taxon>
        <taxon>Rodentia</taxon>
        <taxon>Myomorpha</taxon>
        <taxon>Muroidea</taxon>
        <taxon>Muridae</taxon>
        <taxon>Murinae</taxon>
        <taxon>Rattus</taxon>
    </lineage>
</organism>
<proteinExistence type="evidence at transcript level"/>
<keyword id="KW-0007">Acetylation</keyword>
<keyword id="KW-1185">Reference proteome</keyword>